<name>BDSB2_HETMG</name>
<dbReference type="SMR" id="C0HM68"/>
<dbReference type="GO" id="GO:0005576">
    <property type="term" value="C:extracellular region"/>
    <property type="evidence" value="ECO:0000314"/>
    <property type="project" value="UniProtKB"/>
</dbReference>
<dbReference type="GO" id="GO:0035792">
    <property type="term" value="C:host cell postsynaptic membrane"/>
    <property type="evidence" value="ECO:0007669"/>
    <property type="project" value="UniProtKB-KW"/>
</dbReference>
<dbReference type="GO" id="GO:0042151">
    <property type="term" value="C:nematocyst"/>
    <property type="evidence" value="ECO:0000314"/>
    <property type="project" value="UniProtKB"/>
</dbReference>
<dbReference type="GO" id="GO:0030549">
    <property type="term" value="F:acetylcholine receptor activator activity"/>
    <property type="evidence" value="ECO:0000314"/>
    <property type="project" value="UniProtKB"/>
</dbReference>
<dbReference type="GO" id="GO:0030550">
    <property type="term" value="F:acetylcholine receptor inhibitor activity"/>
    <property type="evidence" value="ECO:0007669"/>
    <property type="project" value="UniProtKB-KW"/>
</dbReference>
<dbReference type="GO" id="GO:0008200">
    <property type="term" value="F:ion channel inhibitor activity"/>
    <property type="evidence" value="ECO:0007669"/>
    <property type="project" value="InterPro"/>
</dbReference>
<dbReference type="GO" id="GO:0090729">
    <property type="term" value="F:toxin activity"/>
    <property type="evidence" value="ECO:0000314"/>
    <property type="project" value="UniProtKB"/>
</dbReference>
<dbReference type="Gene3D" id="2.20.20.10">
    <property type="entry name" value="Anthopleurin-A"/>
    <property type="match status" value="1"/>
</dbReference>
<dbReference type="InterPro" id="IPR012414">
    <property type="entry name" value="BDS_K_chnl_tox"/>
</dbReference>
<dbReference type="InterPro" id="IPR023355">
    <property type="entry name" value="Myo_ane_neurotoxin_sf"/>
</dbReference>
<dbReference type="Pfam" id="PF07936">
    <property type="entry name" value="Defensin_4"/>
    <property type="match status" value="1"/>
</dbReference>
<dbReference type="SUPFAM" id="SSF57392">
    <property type="entry name" value="Defensin-like"/>
    <property type="match status" value="1"/>
</dbReference>
<feature type="signal peptide" evidence="3">
    <location>
        <begin position="1"/>
        <end position="21"/>
    </location>
</feature>
<feature type="propeptide" id="PRO_0000462166" evidence="4">
    <location>
        <begin position="22"/>
        <end position="34"/>
    </location>
</feature>
<feature type="peptide" id="PRO_0000458047" description="Pi/alpha-stichotoxin-Hmg5b" evidence="4">
    <location>
        <begin position="37"/>
        <end position="77"/>
    </location>
</feature>
<feature type="modified residue" description="Methionine sulfoxide; partial" evidence="4">
    <location>
        <position position="52"/>
    </location>
</feature>
<feature type="disulfide bond" evidence="2">
    <location>
        <begin position="40"/>
        <end position="73"/>
    </location>
</feature>
<feature type="disulfide bond" evidence="2">
    <location>
        <begin position="42"/>
        <end position="66"/>
    </location>
</feature>
<feature type="disulfide bond" evidence="2">
    <location>
        <begin position="56"/>
        <end position="74"/>
    </location>
</feature>
<feature type="unsure residue" description="Assigned by comparison with orthologs" evidence="7">
    <location>
        <begin position="61"/>
        <end position="64"/>
    </location>
</feature>
<accession>C0HM68</accession>
<proteinExistence type="evidence at protein level"/>
<reference key="1">
    <citation type="journal article" date="2022" name="Toxins">
        <title>Nicotinic acetylcholine receptors are novel targets of APETx-like toxins from the sea anemone Heteractis magnifica.</title>
        <authorList>
            <person name="Kalina R.S."/>
            <person name="Kasheverov I.E."/>
            <person name="Koshelev S.G."/>
            <person name="Sintsova O.V."/>
            <person name="Peigneur S."/>
            <person name="Pinheiro-Junior E.L."/>
            <person name="Popov R.S."/>
            <person name="Chausova V.E."/>
            <person name="Monastyrnaya M.M."/>
            <person name="Dmitrenok P.S."/>
            <person name="Isaeva M.P."/>
            <person name="Tytgat J."/>
            <person name="Kozlov S.A."/>
            <person name="Kozlovskaya E.P."/>
            <person name="Leychenko E.V."/>
            <person name="Gladkikh I.N."/>
        </authorList>
    </citation>
    <scope>NUCLEOTIDE SEQUENCE [MRNA]</scope>
    <scope>PROTEIN SEQUENCE OF 37-73</scope>
    <scope>IDENTIFICATION BY MASS SPECTROMETRY</scope>
    <scope>FUNCTION</scope>
    <scope>SUBCELLULAR LOCATION</scope>
    <scope>PARTIAL OXIDATION AT MET-52</scope>
</reference>
<reference key="2">
    <citation type="journal article" date="2023" name="Toxins">
        <title>Anxiolytic, analgesic and anti-inflammatory effects of peptides Hmg 1b-2 and Hmg 1b-4 from the sea anemone Heteractis magnifica.</title>
        <authorList>
            <person name="Gladkikh I.N."/>
            <person name="Klimovich A.A."/>
            <person name="Kalina R.S."/>
            <person name="Kozhevnikova Y.V."/>
            <person name="Khasanov T.A."/>
            <person name="Osmakov D.I."/>
            <person name="Koshelev S.G."/>
            <person name="Monastyrnaya M.M."/>
            <person name="Andreev Y.A."/>
            <person name="Leychenko E.V."/>
            <person name="Kozlov S.A."/>
        </authorList>
    </citation>
    <scope>FUNCTION</scope>
    <scope>BIOASSAY</scope>
    <scope>SUBCELLULAR LOCATION</scope>
    <source>
        <tissue>Venom</tissue>
    </source>
</reference>
<sequence>MDYQRLLFLFAVAMVITTTVALPKDTALMDGQLQKRGTPCKCHGYIGVYWFMLAGCPNGYGYNLSCPYFLGICCVKK</sequence>
<protein>
    <recommendedName>
        <fullName evidence="7">Pi/alpha-stichotoxin-Hmg5b</fullName>
        <shortName evidence="7">Pi/alpha-SHTX-Hmg5b</shortName>
    </recommendedName>
    <alternativeName>
        <fullName evidence="1">APETx-like peptide</fullName>
    </alternativeName>
    <alternativeName>
        <fullName evidence="6">Hmg 1b-2</fullName>
    </alternativeName>
</protein>
<comment type="function">
    <text evidence="1 4 5">The non-oxidized toxin is remarkably non-selective with activity on many different ion channels. Weakly and reversibly inhibits rat and human homomeric ASIC1 (isoform ASIC1a) (IC(50)=4.8 uM, and IC(50)=14.6 uM), and ASIC3 (IC(50)=15.9 uM) (By similarity) (PubMed:37235375). Molecular modeling interaction with ASIC1a suggests that this peptide hinders the collapse of acidic pockets and stabilizes nonconducting channels state (By similarity). It activates several potassium channels including Kv1.1/KCNA1, Kv1.2/KCNA2, and drosophila Shaker IR (By similarity). It moderately to potently inhibits potassium channels including Kv1.3/KCNA3, Kv1.4/KCNA4, Kv1.5/KCNA5, Kv1.6/KCNA6, Kv2.1/KCNB1, Kv4.2/KCND2, Kv7.1/KCNQ1, Kv7.2/Kv7.3 (KCNQ2/KCNQ3), Kv7.4/KCNQ4, hERG/KCNH2, and C.elegans QKT1 (By similarity). On sodium channels, it moderately to potently inhibits Nav1.1/SCN1A, Nav1.2/SCN2A, Nav1.3/SCN3A, Nav1.4/SCN4A, Nav1.5/SCN5A, Nav1.6/SCN8A, Nav1.7/SCN9A, Nav1.8/SCN10A, and B.germanica BgNav (By similarity). It also moderately to potently inhibits Cav3.1/CACNA1G, Cav3.2/CACNA1H, and Cav3.3/CACNA1I (By similarity). Significant shifts in the voltage-current relationship are observed on Kv and Nav, depending on the channel isoform, whereas the toxin does not seem to modulate the voltage-sensor domains of Cav channels, acting mainly as a pore blocker (By similarity). Does not activate nicotinic acetylcholine receptors (nAChR), but potentiates ACh-elicited current of human alpha-7/CHRNA7 nAChR (PubMed:36287966). Is also able to bind T.californica muscle-type nAChRs (PubMed:36287966). In vivo, causes an excitatory effect in mice behavior (PubMed:37235375). Also shows antihyperalgesic and analgesic activity in the acid-induced muscle pain mice model, and weak anti-inflammatory effect in models of acute local inflammation (By similarity) (PubMed:37235375).</text>
</comment>
<comment type="function">
    <text evidence="4">Forms an oxidized toxin derivative (Hmg 1b-2 MetOx) (PubMed:36287966). Able to bind T.californica muscle-type nAChRs (alpha-1-beta-1-delta-epsilon (CHRNA1-CHRNB1-CHRND-CHRNE)) (PubMed:36287966).</text>
</comment>
<comment type="subcellular location">
    <subcellularLocation>
        <location evidence="4 5">Secreted</location>
    </subcellularLocation>
    <subcellularLocation>
        <location evidence="8">Nematocyst</location>
    </subcellularLocation>
    <text evidence="4">Present in the mucus.</text>
</comment>
<comment type="PTM">
    <text evidence="4">Toxin occurs in two forms in the mucus, Hmg 1b-2 which is not oxidized and Hmg 1b-2 MetOx which is oxidized at Met-52.</text>
</comment>
<comment type="mass spectrometry">
    <text>Monoisotopic mass.</text>
</comment>
<comment type="mass spectrometry">
    <text>With oxidation, monoisotopic mass.</text>
</comment>
<comment type="miscellaneous">
    <text evidence="7">A synonymy between H.magnifica and R.crispa is controversial.</text>
</comment>
<comment type="miscellaneous">
    <text evidence="7">The primary structure of this peptide is identical to Hcr 1b-2 from Radianthus crispa (AC C0HL52).</text>
</comment>
<comment type="miscellaneous">
    <text evidence="1 4">Negative results: the non-oxidized toxin does not activate or potentiate the current of human muscle alpha-1-beta-1-delta-epsilon (CHRNA1-CHRNB1-CHRND-CHRNE) nAChRs (PubMed:36287966). Does not show activity on Kv3.1/KCNC1, and Kv10.1/KCNH1 potassium channels (By similarity).</text>
</comment>
<comment type="miscellaneous">
    <text evidence="4">Negative results: the oxidized toxin has no modulatory effect on rat ASIC1a and ASIC3 channels (PubMed:36287966).</text>
</comment>
<comment type="similarity">
    <text evidence="7">Belongs to the sea anemone type 3 (BDS) potassium channel toxin family.</text>
</comment>
<evidence type="ECO:0000250" key="1">
    <source>
        <dbReference type="UniProtKB" id="C0HL52"/>
    </source>
</evidence>
<evidence type="ECO:0000250" key="2">
    <source>
        <dbReference type="UniProtKB" id="P61541"/>
    </source>
</evidence>
<evidence type="ECO:0000255" key="3"/>
<evidence type="ECO:0000269" key="4">
    <source>
    </source>
</evidence>
<evidence type="ECO:0000269" key="5">
    <source>
    </source>
</evidence>
<evidence type="ECO:0000303" key="6">
    <source>
    </source>
</evidence>
<evidence type="ECO:0000305" key="7"/>
<evidence type="ECO:0000305" key="8">
    <source>
    </source>
</evidence>
<organism>
    <name type="scientific">Heteractis magnifica</name>
    <name type="common">Magnificent sea anemone</name>
    <name type="synonym">Radianthus magnifica</name>
    <dbReference type="NCBI Taxonomy" id="38281"/>
    <lineage>
        <taxon>Eukaryota</taxon>
        <taxon>Metazoa</taxon>
        <taxon>Cnidaria</taxon>
        <taxon>Anthozoa</taxon>
        <taxon>Hexacorallia</taxon>
        <taxon>Actiniaria</taxon>
        <taxon>Stichodactylidae</taxon>
        <taxon>Heteractis</taxon>
    </lineage>
</organism>
<keyword id="KW-0008">Acetylcholine receptor inhibiting toxin</keyword>
<keyword id="KW-0108">Calcium channel impairing toxin</keyword>
<keyword id="KW-0165">Cleavage on pair of basic residues</keyword>
<keyword id="KW-0903">Direct protein sequencing</keyword>
<keyword id="KW-1015">Disulfide bond</keyword>
<keyword id="KW-0872">Ion channel impairing toxin</keyword>
<keyword id="KW-0166">Nematocyst</keyword>
<keyword id="KW-0528">Neurotoxin</keyword>
<keyword id="KW-0558">Oxidation</keyword>
<keyword id="KW-0629">Postsynaptic neurotoxin</keyword>
<keyword id="KW-0632">Potassium channel impairing toxin</keyword>
<keyword id="KW-1275">Proton-gated sodium channel impairing toxin</keyword>
<keyword id="KW-0964">Secreted</keyword>
<keyword id="KW-0732">Signal</keyword>
<keyword id="KW-0800">Toxin</keyword>
<keyword id="KW-1218">Voltage-gated calcium channel impairing toxin</keyword>
<keyword id="KW-1220">Voltage-gated potassium channel impairing toxin</keyword>
<keyword id="KW-0738">Voltage-gated sodium channel impairing toxin</keyword>